<gene>
    <name evidence="1" type="primary">ftsH</name>
    <name type="ordered locus">RT0087</name>
</gene>
<sequence>MNNQGRSILAWAALFIFVILLFNVFQSDGLLGVRNNITFSDFLTRVDERTINSVKIQGRVIEGTSNDGSTFSTYSPDYPDLVNRLTSNDVNIEVVPLETRMNTFLGFLISWFPMLLLIGVWVFFMRQMHGGGKAMGFGKSKARLLSDKGPKITFKDVAGIDEAKEELTEIVDFLRDPSKFQKLGGKIPKGCLLIGPPGTGKTLLAKAIAGEANVPFFSISGSDFVEMFVGVGASRVRDMFEQGKRNAPCIIFIDEIDAVGRHRGIGMGGGNDEREQTLNQMLVEMDGFEANEGVVIIAATNRPDVLDRALLRPGRFDRQIAVANPDINGREQILKVHLKKIKYNSTVLARIIARGTPGFSGAELANLVNEAALIAARLGKKEVDMHDMEEAKDKVLMGVVRRSIAMSEKEKRLTAYHEGGHALVGLYCPAASPIHKATIIPRGNALGMVQRLPETDEYSQNREQMESSIAVYMAGRVAEEIIFGKNKVTSGAASDIKGATNIARAMVTKAGLSDLIGPIFHGSSSDDMYGRQQSNEISEATAKLIDAEVKKIITQGYEFAKDILTKHIDQLHTLANALIEYETLSGQQIKNLLSGRALDSEEENKFPFNDAHTIKIDKEKLHEKTKTTKAQKENIAS</sequence>
<evidence type="ECO:0000255" key="1">
    <source>
        <dbReference type="HAMAP-Rule" id="MF_01458"/>
    </source>
</evidence>
<evidence type="ECO:0000256" key="2">
    <source>
        <dbReference type="SAM" id="MobiDB-lite"/>
    </source>
</evidence>
<proteinExistence type="inferred from homology"/>
<organism>
    <name type="scientific">Rickettsia typhi (strain ATCC VR-144 / Wilmington)</name>
    <dbReference type="NCBI Taxonomy" id="257363"/>
    <lineage>
        <taxon>Bacteria</taxon>
        <taxon>Pseudomonadati</taxon>
        <taxon>Pseudomonadota</taxon>
        <taxon>Alphaproteobacteria</taxon>
        <taxon>Rickettsiales</taxon>
        <taxon>Rickettsiaceae</taxon>
        <taxon>Rickettsieae</taxon>
        <taxon>Rickettsia</taxon>
        <taxon>typhus group</taxon>
    </lineage>
</organism>
<name>FTSH_RICTY</name>
<dbReference type="EC" id="3.4.24.-" evidence="1"/>
<dbReference type="EMBL" id="AE017197">
    <property type="protein sequence ID" value="AAU03573.1"/>
    <property type="molecule type" value="Genomic_DNA"/>
</dbReference>
<dbReference type="RefSeq" id="WP_011190560.1">
    <property type="nucleotide sequence ID" value="NC_006142.1"/>
</dbReference>
<dbReference type="SMR" id="Q68XR9"/>
<dbReference type="KEGG" id="rty:RT0087"/>
<dbReference type="eggNOG" id="COG0465">
    <property type="taxonomic scope" value="Bacteria"/>
</dbReference>
<dbReference type="HOGENOM" id="CLU_000688_16_2_5"/>
<dbReference type="OrthoDB" id="9809379at2"/>
<dbReference type="Proteomes" id="UP000000604">
    <property type="component" value="Chromosome"/>
</dbReference>
<dbReference type="GO" id="GO:0005886">
    <property type="term" value="C:plasma membrane"/>
    <property type="evidence" value="ECO:0007669"/>
    <property type="project" value="UniProtKB-SubCell"/>
</dbReference>
<dbReference type="GO" id="GO:0005524">
    <property type="term" value="F:ATP binding"/>
    <property type="evidence" value="ECO:0007669"/>
    <property type="project" value="UniProtKB-UniRule"/>
</dbReference>
<dbReference type="GO" id="GO:0016887">
    <property type="term" value="F:ATP hydrolysis activity"/>
    <property type="evidence" value="ECO:0007669"/>
    <property type="project" value="UniProtKB-UniRule"/>
</dbReference>
<dbReference type="GO" id="GO:0004176">
    <property type="term" value="F:ATP-dependent peptidase activity"/>
    <property type="evidence" value="ECO:0007669"/>
    <property type="project" value="InterPro"/>
</dbReference>
<dbReference type="GO" id="GO:0004222">
    <property type="term" value="F:metalloendopeptidase activity"/>
    <property type="evidence" value="ECO:0007669"/>
    <property type="project" value="InterPro"/>
</dbReference>
<dbReference type="GO" id="GO:0008270">
    <property type="term" value="F:zinc ion binding"/>
    <property type="evidence" value="ECO:0007669"/>
    <property type="project" value="UniProtKB-UniRule"/>
</dbReference>
<dbReference type="GO" id="GO:0030163">
    <property type="term" value="P:protein catabolic process"/>
    <property type="evidence" value="ECO:0007669"/>
    <property type="project" value="UniProtKB-UniRule"/>
</dbReference>
<dbReference type="GO" id="GO:0006508">
    <property type="term" value="P:proteolysis"/>
    <property type="evidence" value="ECO:0007669"/>
    <property type="project" value="UniProtKB-KW"/>
</dbReference>
<dbReference type="CDD" id="cd19501">
    <property type="entry name" value="RecA-like_FtsH"/>
    <property type="match status" value="1"/>
</dbReference>
<dbReference type="FunFam" id="1.10.8.60:FF:000001">
    <property type="entry name" value="ATP-dependent zinc metalloprotease FtsH"/>
    <property type="match status" value="1"/>
</dbReference>
<dbReference type="FunFam" id="1.20.58.760:FF:000002">
    <property type="entry name" value="ATP-dependent zinc metalloprotease FtsH"/>
    <property type="match status" value="1"/>
</dbReference>
<dbReference type="FunFam" id="3.40.50.300:FF:000001">
    <property type="entry name" value="ATP-dependent zinc metalloprotease FtsH"/>
    <property type="match status" value="1"/>
</dbReference>
<dbReference type="Gene3D" id="1.10.8.60">
    <property type="match status" value="1"/>
</dbReference>
<dbReference type="Gene3D" id="3.30.720.210">
    <property type="match status" value="1"/>
</dbReference>
<dbReference type="Gene3D" id="3.40.50.300">
    <property type="entry name" value="P-loop containing nucleotide triphosphate hydrolases"/>
    <property type="match status" value="1"/>
</dbReference>
<dbReference type="Gene3D" id="1.20.58.760">
    <property type="entry name" value="Peptidase M41"/>
    <property type="match status" value="1"/>
</dbReference>
<dbReference type="HAMAP" id="MF_01458">
    <property type="entry name" value="FtsH"/>
    <property type="match status" value="1"/>
</dbReference>
<dbReference type="InterPro" id="IPR003593">
    <property type="entry name" value="AAA+_ATPase"/>
</dbReference>
<dbReference type="InterPro" id="IPR041569">
    <property type="entry name" value="AAA_lid_3"/>
</dbReference>
<dbReference type="InterPro" id="IPR003959">
    <property type="entry name" value="ATPase_AAA_core"/>
</dbReference>
<dbReference type="InterPro" id="IPR003960">
    <property type="entry name" value="ATPase_AAA_CS"/>
</dbReference>
<dbReference type="InterPro" id="IPR005936">
    <property type="entry name" value="FtsH"/>
</dbReference>
<dbReference type="InterPro" id="IPR027417">
    <property type="entry name" value="P-loop_NTPase"/>
</dbReference>
<dbReference type="InterPro" id="IPR011546">
    <property type="entry name" value="Pept_M41_FtsH_extracell"/>
</dbReference>
<dbReference type="InterPro" id="IPR000642">
    <property type="entry name" value="Peptidase_M41"/>
</dbReference>
<dbReference type="InterPro" id="IPR037219">
    <property type="entry name" value="Peptidase_M41-like"/>
</dbReference>
<dbReference type="NCBIfam" id="TIGR01241">
    <property type="entry name" value="FtsH_fam"/>
    <property type="match status" value="1"/>
</dbReference>
<dbReference type="PANTHER" id="PTHR23076:SF97">
    <property type="entry name" value="ATP-DEPENDENT ZINC METALLOPROTEASE YME1L1"/>
    <property type="match status" value="1"/>
</dbReference>
<dbReference type="PANTHER" id="PTHR23076">
    <property type="entry name" value="METALLOPROTEASE M41 FTSH"/>
    <property type="match status" value="1"/>
</dbReference>
<dbReference type="Pfam" id="PF00004">
    <property type="entry name" value="AAA"/>
    <property type="match status" value="1"/>
</dbReference>
<dbReference type="Pfam" id="PF17862">
    <property type="entry name" value="AAA_lid_3"/>
    <property type="match status" value="1"/>
</dbReference>
<dbReference type="Pfam" id="PF06480">
    <property type="entry name" value="FtsH_ext"/>
    <property type="match status" value="1"/>
</dbReference>
<dbReference type="Pfam" id="PF01434">
    <property type="entry name" value="Peptidase_M41"/>
    <property type="match status" value="1"/>
</dbReference>
<dbReference type="SMART" id="SM00382">
    <property type="entry name" value="AAA"/>
    <property type="match status" value="1"/>
</dbReference>
<dbReference type="SUPFAM" id="SSF140990">
    <property type="entry name" value="FtsH protease domain-like"/>
    <property type="match status" value="1"/>
</dbReference>
<dbReference type="SUPFAM" id="SSF52540">
    <property type="entry name" value="P-loop containing nucleoside triphosphate hydrolases"/>
    <property type="match status" value="1"/>
</dbReference>
<dbReference type="PROSITE" id="PS00674">
    <property type="entry name" value="AAA"/>
    <property type="match status" value="1"/>
</dbReference>
<feature type="chain" id="PRO_0000272337" description="ATP-dependent zinc metalloprotease FtsH">
    <location>
        <begin position="1"/>
        <end position="637"/>
    </location>
</feature>
<feature type="topological domain" description="Cytoplasmic" evidence="1">
    <location>
        <begin position="1"/>
        <end position="6"/>
    </location>
</feature>
<feature type="transmembrane region" description="Helical" evidence="1">
    <location>
        <begin position="7"/>
        <end position="27"/>
    </location>
</feature>
<feature type="topological domain" description="Periplasmic" evidence="1">
    <location>
        <begin position="28"/>
        <end position="103"/>
    </location>
</feature>
<feature type="transmembrane region" description="Helical" evidence="1">
    <location>
        <begin position="104"/>
        <end position="124"/>
    </location>
</feature>
<feature type="topological domain" description="Cytoplasmic" evidence="1">
    <location>
        <begin position="125"/>
        <end position="637"/>
    </location>
</feature>
<feature type="region of interest" description="Disordered" evidence="2">
    <location>
        <begin position="617"/>
        <end position="637"/>
    </location>
</feature>
<feature type="active site" evidence="1">
    <location>
        <position position="418"/>
    </location>
</feature>
<feature type="binding site" evidence="1">
    <location>
        <begin position="195"/>
        <end position="202"/>
    </location>
    <ligand>
        <name>ATP</name>
        <dbReference type="ChEBI" id="CHEBI:30616"/>
    </ligand>
</feature>
<feature type="binding site" evidence="1">
    <location>
        <position position="417"/>
    </location>
    <ligand>
        <name>Zn(2+)</name>
        <dbReference type="ChEBI" id="CHEBI:29105"/>
        <note>catalytic</note>
    </ligand>
</feature>
<feature type="binding site" evidence="1">
    <location>
        <position position="421"/>
    </location>
    <ligand>
        <name>Zn(2+)</name>
        <dbReference type="ChEBI" id="CHEBI:29105"/>
        <note>catalytic</note>
    </ligand>
</feature>
<feature type="binding site" evidence="1">
    <location>
        <position position="495"/>
    </location>
    <ligand>
        <name>Zn(2+)</name>
        <dbReference type="ChEBI" id="CHEBI:29105"/>
        <note>catalytic</note>
    </ligand>
</feature>
<keyword id="KW-0067">ATP-binding</keyword>
<keyword id="KW-0997">Cell inner membrane</keyword>
<keyword id="KW-1003">Cell membrane</keyword>
<keyword id="KW-0378">Hydrolase</keyword>
<keyword id="KW-0472">Membrane</keyword>
<keyword id="KW-0479">Metal-binding</keyword>
<keyword id="KW-0482">Metalloprotease</keyword>
<keyword id="KW-0547">Nucleotide-binding</keyword>
<keyword id="KW-0645">Protease</keyword>
<keyword id="KW-0812">Transmembrane</keyword>
<keyword id="KW-1133">Transmembrane helix</keyword>
<keyword id="KW-0862">Zinc</keyword>
<comment type="function">
    <text evidence="1">Acts as a processive, ATP-dependent zinc metallopeptidase for both cytoplasmic and membrane proteins. Plays a role in the quality control of integral membrane proteins.</text>
</comment>
<comment type="cofactor">
    <cofactor evidence="1">
        <name>Zn(2+)</name>
        <dbReference type="ChEBI" id="CHEBI:29105"/>
    </cofactor>
    <text evidence="1">Binds 1 zinc ion per subunit.</text>
</comment>
<comment type="subunit">
    <text evidence="1">Homohexamer.</text>
</comment>
<comment type="subcellular location">
    <subcellularLocation>
        <location evidence="1">Cell inner membrane</location>
        <topology evidence="1">Multi-pass membrane protein</topology>
        <orientation evidence="1">Cytoplasmic side</orientation>
    </subcellularLocation>
</comment>
<comment type="similarity">
    <text evidence="1">In the central section; belongs to the AAA ATPase family.</text>
</comment>
<comment type="similarity">
    <text evidence="1">In the C-terminal section; belongs to the peptidase M41 family.</text>
</comment>
<reference key="1">
    <citation type="journal article" date="2004" name="J. Bacteriol.">
        <title>Complete genome sequence of Rickettsia typhi and comparison with sequences of other Rickettsiae.</title>
        <authorList>
            <person name="McLeod M.P."/>
            <person name="Qin X."/>
            <person name="Karpathy S.E."/>
            <person name="Gioia J."/>
            <person name="Highlander S.K."/>
            <person name="Fox G.E."/>
            <person name="McNeill T.Z."/>
            <person name="Jiang H."/>
            <person name="Muzny D."/>
            <person name="Jacob L.S."/>
            <person name="Hawes A.C."/>
            <person name="Sodergren E."/>
            <person name="Gill R."/>
            <person name="Hume J."/>
            <person name="Morgan M."/>
            <person name="Fan G."/>
            <person name="Amin A.G."/>
            <person name="Gibbs R.A."/>
            <person name="Hong C."/>
            <person name="Yu X.-J."/>
            <person name="Walker D.H."/>
            <person name="Weinstock G.M."/>
        </authorList>
    </citation>
    <scope>NUCLEOTIDE SEQUENCE [LARGE SCALE GENOMIC DNA]</scope>
    <source>
        <strain>ATCC VR-144 / Wilmington</strain>
    </source>
</reference>
<protein>
    <recommendedName>
        <fullName evidence="1">ATP-dependent zinc metalloprotease FtsH</fullName>
        <ecNumber evidence="1">3.4.24.-</ecNumber>
    </recommendedName>
</protein>
<accession>Q68XR9</accession>